<reference key="1">
    <citation type="journal article" date="2003" name="Proc. Natl. Acad. Sci. U.S.A.">
        <title>Complete genome sequence of the Q-fever pathogen, Coxiella burnetii.</title>
        <authorList>
            <person name="Seshadri R."/>
            <person name="Paulsen I.T."/>
            <person name="Eisen J.A."/>
            <person name="Read T.D."/>
            <person name="Nelson K.E."/>
            <person name="Nelson W.C."/>
            <person name="Ward N.L."/>
            <person name="Tettelin H."/>
            <person name="Davidsen T.M."/>
            <person name="Beanan M.J."/>
            <person name="DeBoy R.T."/>
            <person name="Daugherty S.C."/>
            <person name="Brinkac L.M."/>
            <person name="Madupu R."/>
            <person name="Dodson R.J."/>
            <person name="Khouri H.M."/>
            <person name="Lee K.H."/>
            <person name="Carty H.A."/>
            <person name="Scanlan D."/>
            <person name="Heinzen R.A."/>
            <person name="Thompson H.A."/>
            <person name="Samuel J.E."/>
            <person name="Fraser C.M."/>
            <person name="Heidelberg J.F."/>
        </authorList>
    </citation>
    <scope>NUCLEOTIDE SEQUENCE [LARGE SCALE GENOMIC DNA]</scope>
    <source>
        <strain>RSA 493 / Nine Mile phase I</strain>
    </source>
</reference>
<reference key="2">
    <citation type="journal article" date="2007" name="Infect. Immun.">
        <title>Proteome and antigen profiling of Coxiella burnetii developmental forms.</title>
        <authorList>
            <person name="Coleman S.A."/>
            <person name="Fischer E.R."/>
            <person name="Cockrell D.C."/>
            <person name="Voth D.E."/>
            <person name="Howe D."/>
            <person name="Mead D.J."/>
            <person name="Samuel J.E."/>
            <person name="Heinzen R.A."/>
        </authorList>
    </citation>
    <scope>IDENTIFICATION BY MASS SPECTROMETRY</scope>
    <scope>DEVELOPMENTAL STAGE</scope>
    <source>
        <strain>Nine Mile Crazy / RSA 514</strain>
    </source>
</reference>
<dbReference type="EMBL" id="AE016828">
    <property type="protein sequence ID" value="AAO89787.1"/>
    <property type="molecule type" value="Genomic_DNA"/>
</dbReference>
<dbReference type="RefSeq" id="NP_819273.1">
    <property type="nucleotide sequence ID" value="NC_002971.4"/>
</dbReference>
<dbReference type="RefSeq" id="WP_005771617.1">
    <property type="nucleotide sequence ID" value="NZ_CDBG01000001.1"/>
</dbReference>
<dbReference type="SMR" id="P0C8S3"/>
<dbReference type="STRING" id="227377.CBU_0229"/>
<dbReference type="DNASU" id="1208110"/>
<dbReference type="EnsemblBacteria" id="AAO89787">
    <property type="protein sequence ID" value="AAO89787"/>
    <property type="gene ID" value="CBU_0229"/>
</dbReference>
<dbReference type="GeneID" id="1208110"/>
<dbReference type="KEGG" id="cbu:CBU_0229"/>
<dbReference type="PATRIC" id="fig|227377.7.peg.223"/>
<dbReference type="eggNOG" id="COG0222">
    <property type="taxonomic scope" value="Bacteria"/>
</dbReference>
<dbReference type="HOGENOM" id="CLU_086499_3_2_6"/>
<dbReference type="OrthoDB" id="9811748at2"/>
<dbReference type="Proteomes" id="UP000002671">
    <property type="component" value="Chromosome"/>
</dbReference>
<dbReference type="GO" id="GO:0022625">
    <property type="term" value="C:cytosolic large ribosomal subunit"/>
    <property type="evidence" value="ECO:0000318"/>
    <property type="project" value="GO_Central"/>
</dbReference>
<dbReference type="GO" id="GO:0003729">
    <property type="term" value="F:mRNA binding"/>
    <property type="evidence" value="ECO:0000318"/>
    <property type="project" value="GO_Central"/>
</dbReference>
<dbReference type="GO" id="GO:0003735">
    <property type="term" value="F:structural constituent of ribosome"/>
    <property type="evidence" value="ECO:0000318"/>
    <property type="project" value="GO_Central"/>
</dbReference>
<dbReference type="GO" id="GO:0006412">
    <property type="term" value="P:translation"/>
    <property type="evidence" value="ECO:0000318"/>
    <property type="project" value="GO_Central"/>
</dbReference>
<dbReference type="CDD" id="cd00387">
    <property type="entry name" value="Ribosomal_L7_L12"/>
    <property type="match status" value="1"/>
</dbReference>
<dbReference type="FunFam" id="3.30.1390.10:FF:000001">
    <property type="entry name" value="50S ribosomal protein L7/L12"/>
    <property type="match status" value="1"/>
</dbReference>
<dbReference type="Gene3D" id="3.30.1390.10">
    <property type="match status" value="1"/>
</dbReference>
<dbReference type="Gene3D" id="1.20.5.710">
    <property type="entry name" value="Single helix bin"/>
    <property type="match status" value="1"/>
</dbReference>
<dbReference type="HAMAP" id="MF_00368">
    <property type="entry name" value="Ribosomal_bL12"/>
    <property type="match status" value="1"/>
</dbReference>
<dbReference type="InterPro" id="IPR000206">
    <property type="entry name" value="Ribosomal_bL12"/>
</dbReference>
<dbReference type="InterPro" id="IPR013823">
    <property type="entry name" value="Ribosomal_bL12_C"/>
</dbReference>
<dbReference type="InterPro" id="IPR014719">
    <property type="entry name" value="Ribosomal_bL12_C/ClpS-like"/>
</dbReference>
<dbReference type="InterPro" id="IPR008932">
    <property type="entry name" value="Ribosomal_bL12_oligo"/>
</dbReference>
<dbReference type="InterPro" id="IPR036235">
    <property type="entry name" value="Ribosomal_bL12_oligo_N_sf"/>
</dbReference>
<dbReference type="NCBIfam" id="TIGR00855">
    <property type="entry name" value="L12"/>
    <property type="match status" value="1"/>
</dbReference>
<dbReference type="PANTHER" id="PTHR45987">
    <property type="entry name" value="39S RIBOSOMAL PROTEIN L12"/>
    <property type="match status" value="1"/>
</dbReference>
<dbReference type="PANTHER" id="PTHR45987:SF4">
    <property type="entry name" value="LARGE RIBOSOMAL SUBUNIT PROTEIN BL12M"/>
    <property type="match status" value="1"/>
</dbReference>
<dbReference type="Pfam" id="PF00542">
    <property type="entry name" value="Ribosomal_L12"/>
    <property type="match status" value="1"/>
</dbReference>
<dbReference type="Pfam" id="PF16320">
    <property type="entry name" value="Ribosomal_L12_N"/>
    <property type="match status" value="1"/>
</dbReference>
<dbReference type="SUPFAM" id="SSF54736">
    <property type="entry name" value="ClpS-like"/>
    <property type="match status" value="1"/>
</dbReference>
<dbReference type="SUPFAM" id="SSF48300">
    <property type="entry name" value="Ribosomal protein L7/12, oligomerisation (N-terminal) domain"/>
    <property type="match status" value="1"/>
</dbReference>
<gene>
    <name evidence="1" type="primary">rplL</name>
    <name type="ordered locus">CBU_0229</name>
</gene>
<comment type="function">
    <text evidence="1">Forms part of the ribosomal stalk which helps the ribosome interact with GTP-bound translation factors. Is thus essential for accurate translation.</text>
</comment>
<comment type="subunit">
    <text evidence="1">Homodimer. Part of the ribosomal stalk of the 50S ribosomal subunit. Forms a multimeric L10(L12)X complex, where L10 forms an elongated spine to which 2 to 4 L12 dimers bind in a sequential fashion. Binds GTP-bound translation factors.</text>
</comment>
<comment type="developmental stage">
    <text evidence="2">Detected in both the small cell variant (SCV) and in the large cell variant (LCV) stage (at protein level). LCVs are more metabolically active than SCVs.</text>
</comment>
<comment type="similarity">
    <text evidence="1">Belongs to the bacterial ribosomal protein bL12 family.</text>
</comment>
<name>RL7_COXBU</name>
<organism>
    <name type="scientific">Coxiella burnetii (strain RSA 493 / Nine Mile phase I)</name>
    <dbReference type="NCBI Taxonomy" id="227377"/>
    <lineage>
        <taxon>Bacteria</taxon>
        <taxon>Pseudomonadati</taxon>
        <taxon>Pseudomonadota</taxon>
        <taxon>Gammaproteobacteria</taxon>
        <taxon>Legionellales</taxon>
        <taxon>Coxiellaceae</taxon>
        <taxon>Coxiella</taxon>
    </lineage>
</organism>
<accession>P0C8S3</accession>
<accession>O87902</accession>
<evidence type="ECO:0000255" key="1">
    <source>
        <dbReference type="HAMAP-Rule" id="MF_00368"/>
    </source>
</evidence>
<evidence type="ECO:0000269" key="2">
    <source>
    </source>
</evidence>
<evidence type="ECO:0000305" key="3"/>
<keyword id="KW-1185">Reference proteome</keyword>
<keyword id="KW-0687">Ribonucleoprotein</keyword>
<keyword id="KW-0689">Ribosomal protein</keyword>
<proteinExistence type="evidence at protein level"/>
<protein>
    <recommendedName>
        <fullName evidence="1">Large ribosomal subunit protein bL12</fullName>
    </recommendedName>
    <alternativeName>
        <fullName evidence="3">50S ribosomal protein L7/L12</fullName>
    </alternativeName>
</protein>
<feature type="chain" id="PRO_0000157525" description="Large ribosomal subunit protein bL12">
    <location>
        <begin position="1"/>
        <end position="126"/>
    </location>
</feature>
<sequence>MAQLSKDDILEAVANMSVMDVVDLVKAMEEKFGVSAQAAIAVAGPVAGGEAAAAEEKTEFNVKMVSFGDNKIGVIKAIRTITGLGLKEAKDLVESVPSVVKESVSKEEAEKIKKELEEAGAKVELE</sequence>